<proteinExistence type="inferred from homology"/>
<keyword id="KW-0067">ATP-binding</keyword>
<keyword id="KW-0963">Cytoplasm</keyword>
<keyword id="KW-0418">Kinase</keyword>
<keyword id="KW-0460">Magnesium</keyword>
<keyword id="KW-0479">Metal-binding</keyword>
<keyword id="KW-0545">Nucleotide biosynthesis</keyword>
<keyword id="KW-0547">Nucleotide-binding</keyword>
<keyword id="KW-1185">Reference proteome</keyword>
<keyword id="KW-0808">Transferase</keyword>
<protein>
    <recommendedName>
        <fullName evidence="1">Ribose-phosphate pyrophosphokinase</fullName>
        <shortName evidence="1">RPPK</shortName>
        <ecNumber evidence="1">2.7.6.1</ecNumber>
    </recommendedName>
    <alternativeName>
        <fullName evidence="1">5-phospho-D-ribosyl alpha-1-diphosphate synthase</fullName>
    </alternativeName>
    <alternativeName>
        <fullName evidence="1">Phosphoribosyl diphosphate synthase</fullName>
    </alternativeName>
    <alternativeName>
        <fullName evidence="1">Phosphoribosyl pyrophosphate synthase</fullName>
        <shortName evidence="1">P-Rib-PP synthase</shortName>
        <shortName evidence="1">PRPP synthase</shortName>
        <shortName evidence="1">PRPPase</shortName>
    </alternativeName>
</protein>
<accession>Q97E93</accession>
<sequence length="319" mass="34862">MINHGKNIKIFTGNSYPSLAEEIADIIGVQVGDSRVGKFSNGETAVDINETVRGTDLFLIQTLCEPVNDSIMELLIMLDAFKRASAGRITAVIPNYAYARQDRKAKARQPITAKLMADLIHTAGADRVLTMDLHAPQIQGFFDIPVDHLEGVPILAKYFINQNSNTDDLIVVSPDIGGVKRTRKFAEKLHAPIAIIDKRRPKPNVSEVMSIIGDVKGKKAILVDDMIDTAGSIVNAAEALVKMGAKEVSACCTHGVLSGPAIERLENSPLKEVVILNTIPIEGDKRIDKIKVLSVAPIFAEAIRRIYEDMPVSKIFQEE</sequence>
<feature type="chain" id="PRO_0000141126" description="Ribose-phosphate pyrophosphokinase">
    <location>
        <begin position="1"/>
        <end position="319"/>
    </location>
</feature>
<feature type="active site" evidence="1">
    <location>
        <position position="198"/>
    </location>
</feature>
<feature type="binding site" evidence="1">
    <location>
        <begin position="41"/>
        <end position="43"/>
    </location>
    <ligand>
        <name>ATP</name>
        <dbReference type="ChEBI" id="CHEBI:30616"/>
    </ligand>
</feature>
<feature type="binding site" evidence="1">
    <location>
        <begin position="100"/>
        <end position="101"/>
    </location>
    <ligand>
        <name>ATP</name>
        <dbReference type="ChEBI" id="CHEBI:30616"/>
    </ligand>
</feature>
<feature type="binding site" evidence="1">
    <location>
        <position position="134"/>
    </location>
    <ligand>
        <name>Mg(2+)</name>
        <dbReference type="ChEBI" id="CHEBI:18420"/>
        <label>1</label>
    </ligand>
</feature>
<feature type="binding site" evidence="1">
    <location>
        <position position="175"/>
    </location>
    <ligand>
        <name>Mg(2+)</name>
        <dbReference type="ChEBI" id="CHEBI:18420"/>
        <label>2</label>
    </ligand>
</feature>
<feature type="binding site" evidence="1">
    <location>
        <position position="200"/>
    </location>
    <ligand>
        <name>D-ribose 5-phosphate</name>
        <dbReference type="ChEBI" id="CHEBI:78346"/>
    </ligand>
</feature>
<feature type="binding site" evidence="1">
    <location>
        <position position="224"/>
    </location>
    <ligand>
        <name>D-ribose 5-phosphate</name>
        <dbReference type="ChEBI" id="CHEBI:78346"/>
    </ligand>
</feature>
<feature type="binding site" evidence="1">
    <location>
        <begin position="228"/>
        <end position="232"/>
    </location>
    <ligand>
        <name>D-ribose 5-phosphate</name>
        <dbReference type="ChEBI" id="CHEBI:78346"/>
    </ligand>
</feature>
<organism>
    <name type="scientific">Clostridium acetobutylicum (strain ATCC 824 / DSM 792 / JCM 1419 / IAM 19013 / LMG 5710 / NBRC 13948 / NRRL B-527 / VKM B-1787 / 2291 / W)</name>
    <dbReference type="NCBI Taxonomy" id="272562"/>
    <lineage>
        <taxon>Bacteria</taxon>
        <taxon>Bacillati</taxon>
        <taxon>Bacillota</taxon>
        <taxon>Clostridia</taxon>
        <taxon>Eubacteriales</taxon>
        <taxon>Clostridiaceae</taxon>
        <taxon>Clostridium</taxon>
    </lineage>
</organism>
<comment type="function">
    <text evidence="1">Involved in the biosynthesis of the central metabolite phospho-alpha-D-ribosyl-1-pyrophosphate (PRPP) via the transfer of pyrophosphoryl group from ATP to 1-hydroxyl of ribose-5-phosphate (Rib-5-P).</text>
</comment>
<comment type="catalytic activity">
    <reaction evidence="1">
        <text>D-ribose 5-phosphate + ATP = 5-phospho-alpha-D-ribose 1-diphosphate + AMP + H(+)</text>
        <dbReference type="Rhea" id="RHEA:15609"/>
        <dbReference type="ChEBI" id="CHEBI:15378"/>
        <dbReference type="ChEBI" id="CHEBI:30616"/>
        <dbReference type="ChEBI" id="CHEBI:58017"/>
        <dbReference type="ChEBI" id="CHEBI:78346"/>
        <dbReference type="ChEBI" id="CHEBI:456215"/>
        <dbReference type="EC" id="2.7.6.1"/>
    </reaction>
</comment>
<comment type="cofactor">
    <cofactor evidence="1">
        <name>Mg(2+)</name>
        <dbReference type="ChEBI" id="CHEBI:18420"/>
    </cofactor>
    <text evidence="1">Binds 2 Mg(2+) ions per subunit.</text>
</comment>
<comment type="pathway">
    <text evidence="1">Metabolic intermediate biosynthesis; 5-phospho-alpha-D-ribose 1-diphosphate biosynthesis; 5-phospho-alpha-D-ribose 1-diphosphate from D-ribose 5-phosphate (route I): step 1/1.</text>
</comment>
<comment type="subunit">
    <text evidence="1">Homohexamer.</text>
</comment>
<comment type="subcellular location">
    <subcellularLocation>
        <location evidence="1">Cytoplasm</location>
    </subcellularLocation>
</comment>
<comment type="similarity">
    <text evidence="1">Belongs to the ribose-phosphate pyrophosphokinase family. Class I subfamily.</text>
</comment>
<name>KPRS_CLOAB</name>
<reference key="1">
    <citation type="journal article" date="2001" name="J. Bacteriol.">
        <title>Genome sequence and comparative analysis of the solvent-producing bacterium Clostridium acetobutylicum.</title>
        <authorList>
            <person name="Noelling J."/>
            <person name="Breton G."/>
            <person name="Omelchenko M.V."/>
            <person name="Makarova K.S."/>
            <person name="Zeng Q."/>
            <person name="Gibson R."/>
            <person name="Lee H.M."/>
            <person name="Dubois J."/>
            <person name="Qiu D."/>
            <person name="Hitti J."/>
            <person name="Wolf Y.I."/>
            <person name="Tatusov R.L."/>
            <person name="Sabathe F."/>
            <person name="Doucette-Stamm L.A."/>
            <person name="Soucaille P."/>
            <person name="Daly M.J."/>
            <person name="Bennett G.N."/>
            <person name="Koonin E.V."/>
            <person name="Smith D.R."/>
        </authorList>
    </citation>
    <scope>NUCLEOTIDE SEQUENCE [LARGE SCALE GENOMIC DNA]</scope>
    <source>
        <strain>ATCC 824 / DSM 792 / JCM 1419 / IAM 19013 / LMG 5710 / NBRC 13948 / NRRL B-527 / VKM B-1787 / 2291 / W</strain>
    </source>
</reference>
<evidence type="ECO:0000255" key="1">
    <source>
        <dbReference type="HAMAP-Rule" id="MF_00583"/>
    </source>
</evidence>
<dbReference type="EC" id="2.7.6.1" evidence="1"/>
<dbReference type="EMBL" id="AE001437">
    <property type="protein sequence ID" value="AAK81157.1"/>
    <property type="molecule type" value="Genomic_DNA"/>
</dbReference>
<dbReference type="PIR" id="B97296">
    <property type="entry name" value="B97296"/>
</dbReference>
<dbReference type="RefSeq" id="NP_349817.1">
    <property type="nucleotide sequence ID" value="NC_003030.1"/>
</dbReference>
<dbReference type="RefSeq" id="WP_010966497.1">
    <property type="nucleotide sequence ID" value="NC_003030.1"/>
</dbReference>
<dbReference type="SMR" id="Q97E93"/>
<dbReference type="STRING" id="272562.CA_C3221"/>
<dbReference type="KEGG" id="cac:CA_C3221"/>
<dbReference type="PATRIC" id="fig|272562.8.peg.3400"/>
<dbReference type="eggNOG" id="COG0462">
    <property type="taxonomic scope" value="Bacteria"/>
</dbReference>
<dbReference type="HOGENOM" id="CLU_033546_2_0_9"/>
<dbReference type="OrthoDB" id="9777067at2"/>
<dbReference type="UniPathway" id="UPA00087">
    <property type="reaction ID" value="UER00172"/>
</dbReference>
<dbReference type="Proteomes" id="UP000000814">
    <property type="component" value="Chromosome"/>
</dbReference>
<dbReference type="GO" id="GO:0005737">
    <property type="term" value="C:cytoplasm"/>
    <property type="evidence" value="ECO:0007669"/>
    <property type="project" value="UniProtKB-SubCell"/>
</dbReference>
<dbReference type="GO" id="GO:0002189">
    <property type="term" value="C:ribose phosphate diphosphokinase complex"/>
    <property type="evidence" value="ECO:0007669"/>
    <property type="project" value="TreeGrafter"/>
</dbReference>
<dbReference type="GO" id="GO:0005524">
    <property type="term" value="F:ATP binding"/>
    <property type="evidence" value="ECO:0007669"/>
    <property type="project" value="UniProtKB-KW"/>
</dbReference>
<dbReference type="GO" id="GO:0016301">
    <property type="term" value="F:kinase activity"/>
    <property type="evidence" value="ECO:0007669"/>
    <property type="project" value="UniProtKB-KW"/>
</dbReference>
<dbReference type="GO" id="GO:0000287">
    <property type="term" value="F:magnesium ion binding"/>
    <property type="evidence" value="ECO:0007669"/>
    <property type="project" value="UniProtKB-UniRule"/>
</dbReference>
<dbReference type="GO" id="GO:0004749">
    <property type="term" value="F:ribose phosphate diphosphokinase activity"/>
    <property type="evidence" value="ECO:0007669"/>
    <property type="project" value="UniProtKB-UniRule"/>
</dbReference>
<dbReference type="GO" id="GO:0006015">
    <property type="term" value="P:5-phosphoribose 1-diphosphate biosynthetic process"/>
    <property type="evidence" value="ECO:0007669"/>
    <property type="project" value="UniProtKB-UniRule"/>
</dbReference>
<dbReference type="GO" id="GO:0006164">
    <property type="term" value="P:purine nucleotide biosynthetic process"/>
    <property type="evidence" value="ECO:0007669"/>
    <property type="project" value="TreeGrafter"/>
</dbReference>
<dbReference type="GO" id="GO:0009156">
    <property type="term" value="P:ribonucleoside monophosphate biosynthetic process"/>
    <property type="evidence" value="ECO:0007669"/>
    <property type="project" value="InterPro"/>
</dbReference>
<dbReference type="CDD" id="cd06223">
    <property type="entry name" value="PRTases_typeI"/>
    <property type="match status" value="1"/>
</dbReference>
<dbReference type="FunFam" id="3.40.50.2020:FF:000001">
    <property type="entry name" value="Ribose-phosphate pyrophosphokinase"/>
    <property type="match status" value="1"/>
</dbReference>
<dbReference type="Gene3D" id="3.40.50.2020">
    <property type="match status" value="2"/>
</dbReference>
<dbReference type="HAMAP" id="MF_00583_B">
    <property type="entry name" value="RibP_PPkinase_B"/>
    <property type="match status" value="1"/>
</dbReference>
<dbReference type="InterPro" id="IPR000842">
    <property type="entry name" value="PRib_PP_synth_CS"/>
</dbReference>
<dbReference type="InterPro" id="IPR029099">
    <property type="entry name" value="Pribosyltran_N"/>
</dbReference>
<dbReference type="InterPro" id="IPR000836">
    <property type="entry name" value="PRibTrfase_dom"/>
</dbReference>
<dbReference type="InterPro" id="IPR029057">
    <property type="entry name" value="PRTase-like"/>
</dbReference>
<dbReference type="InterPro" id="IPR005946">
    <property type="entry name" value="Rib-P_diPkinase"/>
</dbReference>
<dbReference type="InterPro" id="IPR037515">
    <property type="entry name" value="Rib-P_diPkinase_bac"/>
</dbReference>
<dbReference type="NCBIfam" id="NF002320">
    <property type="entry name" value="PRK01259.1"/>
    <property type="match status" value="1"/>
</dbReference>
<dbReference type="NCBIfam" id="TIGR01251">
    <property type="entry name" value="ribP_PPkin"/>
    <property type="match status" value="1"/>
</dbReference>
<dbReference type="PANTHER" id="PTHR10210">
    <property type="entry name" value="RIBOSE-PHOSPHATE DIPHOSPHOKINASE FAMILY MEMBER"/>
    <property type="match status" value="1"/>
</dbReference>
<dbReference type="PANTHER" id="PTHR10210:SF41">
    <property type="entry name" value="RIBOSE-PHOSPHATE PYROPHOSPHOKINASE 1, CHLOROPLASTIC"/>
    <property type="match status" value="1"/>
</dbReference>
<dbReference type="Pfam" id="PF14572">
    <property type="entry name" value="Pribosyl_synth"/>
    <property type="match status" value="1"/>
</dbReference>
<dbReference type="Pfam" id="PF13793">
    <property type="entry name" value="Pribosyltran_N"/>
    <property type="match status" value="1"/>
</dbReference>
<dbReference type="SMART" id="SM01400">
    <property type="entry name" value="Pribosyltran_N"/>
    <property type="match status" value="1"/>
</dbReference>
<dbReference type="SUPFAM" id="SSF53271">
    <property type="entry name" value="PRTase-like"/>
    <property type="match status" value="1"/>
</dbReference>
<dbReference type="PROSITE" id="PS00114">
    <property type="entry name" value="PRPP_SYNTHASE"/>
    <property type="match status" value="1"/>
</dbReference>
<gene>
    <name evidence="1" type="primary">prs</name>
    <name type="ordered locus">CA_C3221</name>
</gene>